<gene>
    <name evidence="3" type="ordered locus">YHR131W-A</name>
</gene>
<feature type="chain" id="PRO_0000431026" description="Putative uncharacterized protein YHR131W-A">
    <location>
        <begin position="1"/>
        <end position="81"/>
    </location>
</feature>
<evidence type="ECO:0000305" key="1"/>
<evidence type="ECO:0000305" key="2">
    <source>
    </source>
</evidence>
<evidence type="ECO:0000312" key="3">
    <source>
        <dbReference type="SGD" id="S000028782"/>
    </source>
</evidence>
<comment type="miscellaneous">
    <text evidence="1">Partially overlaps YHR131C.</text>
</comment>
<comment type="caution">
    <text evidence="2">Product of a dubious gene prediction unlikely to encode a functional protein. Because of that it is not part of the S.cerevisiae S288c complete/reference proteome set.</text>
</comment>
<accession>A0A023PXM2</accession>
<sequence length="81" mass="9265">MVSKHIELLLLLEVMRTSSIEHVDEDEGDFNLSILLFAMDNLPSIGRAILNKRTTCMHDVGSKIYCGPKKQRFLLCWSTKL</sequence>
<protein>
    <recommendedName>
        <fullName evidence="1">Putative uncharacterized protein YHR131W-A</fullName>
    </recommendedName>
</protein>
<name>YH131_YEAST</name>
<proteinExistence type="uncertain"/>
<organism>
    <name type="scientific">Saccharomyces cerevisiae (strain ATCC 204508 / S288c)</name>
    <name type="common">Baker's yeast</name>
    <dbReference type="NCBI Taxonomy" id="559292"/>
    <lineage>
        <taxon>Eukaryota</taxon>
        <taxon>Fungi</taxon>
        <taxon>Dikarya</taxon>
        <taxon>Ascomycota</taxon>
        <taxon>Saccharomycotina</taxon>
        <taxon>Saccharomycetes</taxon>
        <taxon>Saccharomycetales</taxon>
        <taxon>Saccharomycetaceae</taxon>
        <taxon>Saccharomyces</taxon>
    </lineage>
</organism>
<reference key="1">
    <citation type="journal article" date="1994" name="Science">
        <title>Complete nucleotide sequence of Saccharomyces cerevisiae chromosome VIII.</title>
        <authorList>
            <person name="Johnston M."/>
            <person name="Andrews S."/>
            <person name="Brinkman R."/>
            <person name="Cooper J."/>
            <person name="Ding H."/>
            <person name="Dover J."/>
            <person name="Du Z."/>
            <person name="Favello A."/>
            <person name="Fulton L."/>
            <person name="Gattung S."/>
            <person name="Geisel C."/>
            <person name="Kirsten J."/>
            <person name="Kucaba T."/>
            <person name="Hillier L.W."/>
            <person name="Jier M."/>
            <person name="Johnston L."/>
            <person name="Langston Y."/>
            <person name="Latreille P."/>
            <person name="Louis E.J."/>
            <person name="Macri C."/>
            <person name="Mardis E."/>
            <person name="Menezes S."/>
            <person name="Mouser L."/>
            <person name="Nhan M."/>
            <person name="Rifkin L."/>
            <person name="Riles L."/>
            <person name="St Peter H."/>
            <person name="Trevaskis E."/>
            <person name="Vaughan K."/>
            <person name="Vignati D."/>
            <person name="Wilcox L."/>
            <person name="Wohldman P."/>
            <person name="Waterston R."/>
            <person name="Wilson R."/>
            <person name="Vaudin M."/>
        </authorList>
    </citation>
    <scope>NUCLEOTIDE SEQUENCE [LARGE SCALE GENOMIC DNA]</scope>
    <source>
        <strain>ATCC 204508 / S288c</strain>
    </source>
</reference>
<reference key="2">
    <citation type="journal article" date="2014" name="G3 (Bethesda)">
        <title>The reference genome sequence of Saccharomyces cerevisiae: Then and now.</title>
        <authorList>
            <person name="Engel S.R."/>
            <person name="Dietrich F.S."/>
            <person name="Fisk D.G."/>
            <person name="Binkley G."/>
            <person name="Balakrishnan R."/>
            <person name="Costanzo M.C."/>
            <person name="Dwight S.S."/>
            <person name="Hitz B.C."/>
            <person name="Karra K."/>
            <person name="Nash R.S."/>
            <person name="Weng S."/>
            <person name="Wong E.D."/>
            <person name="Lloyd P."/>
            <person name="Skrzypek M.S."/>
            <person name="Miyasato S.R."/>
            <person name="Simison M."/>
            <person name="Cherry J.M."/>
        </authorList>
    </citation>
    <scope>GENOME REANNOTATION</scope>
    <source>
        <strain>ATCC 204508 / S288c</strain>
    </source>
</reference>
<dbReference type="EMBL" id="KJ412262">
    <property type="protein sequence ID" value="AHX39305.1"/>
    <property type="molecule type" value="Genomic_DNA"/>
</dbReference>
<dbReference type="PaxDb" id="4932-YHR131W-A"/>
<dbReference type="EnsemblFungi" id="YHR131W-A_mRNA">
    <property type="protein sequence ID" value="YHR131W-A"/>
    <property type="gene ID" value="YHR131W-A"/>
</dbReference>
<dbReference type="AGR" id="SGD:S000028782"/>
<dbReference type="SGD" id="S000028782">
    <property type="gene designation" value="YHR131W-A"/>
</dbReference>
<dbReference type="HOGENOM" id="CLU_2575217_0_0_1"/>